<reference key="1">
    <citation type="journal article" date="2002" name="Nucleic Acids Res.">
        <title>Genome sequence of Shigella flexneri 2a: insights into pathogenicity through comparison with genomes of Escherichia coli K12 and O157.</title>
        <authorList>
            <person name="Jin Q."/>
            <person name="Yuan Z."/>
            <person name="Xu J."/>
            <person name="Wang Y."/>
            <person name="Shen Y."/>
            <person name="Lu W."/>
            <person name="Wang J."/>
            <person name="Liu H."/>
            <person name="Yang J."/>
            <person name="Yang F."/>
            <person name="Zhang X."/>
            <person name="Zhang J."/>
            <person name="Yang G."/>
            <person name="Wu H."/>
            <person name="Qu D."/>
            <person name="Dong J."/>
            <person name="Sun L."/>
            <person name="Xue Y."/>
            <person name="Zhao A."/>
            <person name="Gao Y."/>
            <person name="Zhu J."/>
            <person name="Kan B."/>
            <person name="Ding K."/>
            <person name="Chen S."/>
            <person name="Cheng H."/>
            <person name="Yao Z."/>
            <person name="He B."/>
            <person name="Chen R."/>
            <person name="Ma D."/>
            <person name="Qiang B."/>
            <person name="Wen Y."/>
            <person name="Hou Y."/>
            <person name="Yu J."/>
        </authorList>
    </citation>
    <scope>NUCLEOTIDE SEQUENCE [LARGE SCALE GENOMIC DNA]</scope>
    <source>
        <strain>301 / Serotype 2a</strain>
    </source>
</reference>
<reference key="2">
    <citation type="journal article" date="2003" name="Infect. Immun.">
        <title>Complete genome sequence and comparative genomics of Shigella flexneri serotype 2a strain 2457T.</title>
        <authorList>
            <person name="Wei J."/>
            <person name="Goldberg M.B."/>
            <person name="Burland V."/>
            <person name="Venkatesan M.M."/>
            <person name="Deng W."/>
            <person name="Fournier G."/>
            <person name="Mayhew G.F."/>
            <person name="Plunkett G. III"/>
            <person name="Rose D.J."/>
            <person name="Darling A."/>
            <person name="Mau B."/>
            <person name="Perna N.T."/>
            <person name="Payne S.M."/>
            <person name="Runyen-Janecky L.J."/>
            <person name="Zhou S."/>
            <person name="Schwartz D.C."/>
            <person name="Blattner F.R."/>
        </authorList>
    </citation>
    <scope>NUCLEOTIDE SEQUENCE [LARGE SCALE GENOMIC DNA]</scope>
    <source>
        <strain>ATCC 700930 / 2457T / Serotype 2a</strain>
    </source>
</reference>
<evidence type="ECO:0000255" key="1">
    <source>
        <dbReference type="HAMAP-Rule" id="MF_00607"/>
    </source>
</evidence>
<gene>
    <name evidence="1" type="primary">rsmA</name>
    <name evidence="1" type="synonym">ksgA</name>
    <name type="ordered locus">SF0048</name>
    <name type="ordered locus">S0050</name>
</gene>
<comment type="function">
    <text evidence="1">Specifically dimethylates two adjacent adenosines (A1518 and A1519) in the loop of a conserved hairpin near the 3'-end of 16S rRNA in the 30S particle. May play a critical role in biogenesis of 30S subunits.</text>
</comment>
<comment type="catalytic activity">
    <reaction evidence="1">
        <text>adenosine(1518)/adenosine(1519) in 16S rRNA + 4 S-adenosyl-L-methionine = N(6)-dimethyladenosine(1518)/N(6)-dimethyladenosine(1519) in 16S rRNA + 4 S-adenosyl-L-homocysteine + 4 H(+)</text>
        <dbReference type="Rhea" id="RHEA:19609"/>
        <dbReference type="Rhea" id="RHEA-COMP:10232"/>
        <dbReference type="Rhea" id="RHEA-COMP:10233"/>
        <dbReference type="ChEBI" id="CHEBI:15378"/>
        <dbReference type="ChEBI" id="CHEBI:57856"/>
        <dbReference type="ChEBI" id="CHEBI:59789"/>
        <dbReference type="ChEBI" id="CHEBI:74411"/>
        <dbReference type="ChEBI" id="CHEBI:74493"/>
        <dbReference type="EC" id="2.1.1.182"/>
    </reaction>
</comment>
<comment type="subcellular location">
    <subcellularLocation>
        <location evidence="1">Cytoplasm</location>
    </subcellularLocation>
</comment>
<comment type="similarity">
    <text evidence="1">Belongs to the class I-like SAM-binding methyltransferase superfamily. rRNA adenine N(6)-methyltransferase family. RsmA subfamily.</text>
</comment>
<accession>Q83MG8</accession>
<accession>Q7C3B5</accession>
<protein>
    <recommendedName>
        <fullName evidence="1">Ribosomal RNA small subunit methyltransferase A</fullName>
        <ecNumber evidence="1">2.1.1.182</ecNumber>
    </recommendedName>
    <alternativeName>
        <fullName evidence="1">16S rRNA (adenine(1518)-N(6)/adenine(1519)-N(6))-dimethyltransferase</fullName>
    </alternativeName>
    <alternativeName>
        <fullName evidence="1">16S rRNA dimethyladenosine transferase</fullName>
    </alternativeName>
    <alternativeName>
        <fullName evidence="1">16S rRNA dimethylase</fullName>
    </alternativeName>
    <alternativeName>
        <fullName evidence="1">S-adenosylmethionine-6-N', N'-adenosyl(rRNA) dimethyltransferase</fullName>
    </alternativeName>
</protein>
<proteinExistence type="inferred from homology"/>
<dbReference type="EC" id="2.1.1.182" evidence="1"/>
<dbReference type="EMBL" id="AE005674">
    <property type="protein sequence ID" value="AAN41714.1"/>
    <property type="molecule type" value="Genomic_DNA"/>
</dbReference>
<dbReference type="EMBL" id="AE014073">
    <property type="protein sequence ID" value="AAP15594.1"/>
    <property type="molecule type" value="Genomic_DNA"/>
</dbReference>
<dbReference type="RefSeq" id="NP_706007.1">
    <property type="nucleotide sequence ID" value="NC_004337.2"/>
</dbReference>
<dbReference type="RefSeq" id="WP_001065372.1">
    <property type="nucleotide sequence ID" value="NZ_WPGW01000005.1"/>
</dbReference>
<dbReference type="SMR" id="Q83MG8"/>
<dbReference type="STRING" id="198214.SF0048"/>
<dbReference type="PaxDb" id="198214-SF0048"/>
<dbReference type="GeneID" id="1024571"/>
<dbReference type="KEGG" id="sfl:SF0048"/>
<dbReference type="KEGG" id="sfx:S0050"/>
<dbReference type="PATRIC" id="fig|198214.7.peg.57"/>
<dbReference type="HOGENOM" id="CLU_041220_0_1_6"/>
<dbReference type="Proteomes" id="UP000001006">
    <property type="component" value="Chromosome"/>
</dbReference>
<dbReference type="Proteomes" id="UP000002673">
    <property type="component" value="Chromosome"/>
</dbReference>
<dbReference type="GO" id="GO:0005829">
    <property type="term" value="C:cytosol"/>
    <property type="evidence" value="ECO:0007669"/>
    <property type="project" value="TreeGrafter"/>
</dbReference>
<dbReference type="GO" id="GO:0052908">
    <property type="term" value="F:16S rRNA (adenine(1518)-N(6)/adenine(1519)-N(6))-dimethyltransferase activity"/>
    <property type="evidence" value="ECO:0007669"/>
    <property type="project" value="UniProtKB-EC"/>
</dbReference>
<dbReference type="GO" id="GO:0003723">
    <property type="term" value="F:RNA binding"/>
    <property type="evidence" value="ECO:0007669"/>
    <property type="project" value="UniProtKB-KW"/>
</dbReference>
<dbReference type="FunFam" id="1.10.8.100:FF:000001">
    <property type="entry name" value="Ribosomal RNA small subunit methyltransferase A"/>
    <property type="match status" value="1"/>
</dbReference>
<dbReference type="FunFam" id="3.40.50.150:FF:000006">
    <property type="entry name" value="Ribosomal RNA small subunit methyltransferase A"/>
    <property type="match status" value="1"/>
</dbReference>
<dbReference type="Gene3D" id="1.10.8.100">
    <property type="entry name" value="Ribosomal RNA adenine dimethylase-like, domain 2"/>
    <property type="match status" value="1"/>
</dbReference>
<dbReference type="Gene3D" id="3.40.50.150">
    <property type="entry name" value="Vaccinia Virus protein VP39"/>
    <property type="match status" value="1"/>
</dbReference>
<dbReference type="HAMAP" id="MF_00607">
    <property type="entry name" value="16SrRNA_methyltr_A"/>
    <property type="match status" value="1"/>
</dbReference>
<dbReference type="InterPro" id="IPR001737">
    <property type="entry name" value="KsgA/Erm"/>
</dbReference>
<dbReference type="InterPro" id="IPR023165">
    <property type="entry name" value="rRNA_Ade_diMease-like_C"/>
</dbReference>
<dbReference type="InterPro" id="IPR020596">
    <property type="entry name" value="rRNA_Ade_Mease_Trfase_CS"/>
</dbReference>
<dbReference type="InterPro" id="IPR020598">
    <property type="entry name" value="rRNA_Ade_methylase_Trfase_N"/>
</dbReference>
<dbReference type="InterPro" id="IPR011530">
    <property type="entry name" value="rRNA_adenine_dimethylase"/>
</dbReference>
<dbReference type="InterPro" id="IPR029063">
    <property type="entry name" value="SAM-dependent_MTases_sf"/>
</dbReference>
<dbReference type="NCBIfam" id="TIGR00755">
    <property type="entry name" value="ksgA"/>
    <property type="match status" value="1"/>
</dbReference>
<dbReference type="PANTHER" id="PTHR11727">
    <property type="entry name" value="DIMETHYLADENOSINE TRANSFERASE"/>
    <property type="match status" value="1"/>
</dbReference>
<dbReference type="PANTHER" id="PTHR11727:SF7">
    <property type="entry name" value="DIMETHYLADENOSINE TRANSFERASE-RELATED"/>
    <property type="match status" value="1"/>
</dbReference>
<dbReference type="Pfam" id="PF00398">
    <property type="entry name" value="RrnaAD"/>
    <property type="match status" value="1"/>
</dbReference>
<dbReference type="SMART" id="SM00650">
    <property type="entry name" value="rADc"/>
    <property type="match status" value="1"/>
</dbReference>
<dbReference type="SUPFAM" id="SSF53335">
    <property type="entry name" value="S-adenosyl-L-methionine-dependent methyltransferases"/>
    <property type="match status" value="1"/>
</dbReference>
<dbReference type="PROSITE" id="PS01131">
    <property type="entry name" value="RRNA_A_DIMETH"/>
    <property type="match status" value="1"/>
</dbReference>
<dbReference type="PROSITE" id="PS51689">
    <property type="entry name" value="SAM_RNA_A_N6_MT"/>
    <property type="match status" value="1"/>
</dbReference>
<name>RSMA_SHIFL</name>
<feature type="chain" id="PRO_0000101601" description="Ribosomal RNA small subunit methyltransferase A">
    <location>
        <begin position="1"/>
        <end position="273"/>
    </location>
</feature>
<feature type="binding site" evidence="1">
    <location>
        <position position="18"/>
    </location>
    <ligand>
        <name>S-adenosyl-L-methionine</name>
        <dbReference type="ChEBI" id="CHEBI:59789"/>
    </ligand>
</feature>
<feature type="binding site" evidence="1">
    <location>
        <position position="20"/>
    </location>
    <ligand>
        <name>S-adenosyl-L-methionine</name>
        <dbReference type="ChEBI" id="CHEBI:59789"/>
    </ligand>
</feature>
<feature type="binding site" evidence="1">
    <location>
        <position position="45"/>
    </location>
    <ligand>
        <name>S-adenosyl-L-methionine</name>
        <dbReference type="ChEBI" id="CHEBI:59789"/>
    </ligand>
</feature>
<feature type="binding site" evidence="1">
    <location>
        <position position="66"/>
    </location>
    <ligand>
        <name>S-adenosyl-L-methionine</name>
        <dbReference type="ChEBI" id="CHEBI:59789"/>
    </ligand>
</feature>
<feature type="binding site" evidence="1">
    <location>
        <position position="91"/>
    </location>
    <ligand>
        <name>S-adenosyl-L-methionine</name>
        <dbReference type="ChEBI" id="CHEBI:59789"/>
    </ligand>
</feature>
<feature type="binding site" evidence="1">
    <location>
        <position position="113"/>
    </location>
    <ligand>
        <name>S-adenosyl-L-methionine</name>
        <dbReference type="ChEBI" id="CHEBI:59789"/>
    </ligand>
</feature>
<keyword id="KW-0963">Cytoplasm</keyword>
<keyword id="KW-0489">Methyltransferase</keyword>
<keyword id="KW-1185">Reference proteome</keyword>
<keyword id="KW-0694">RNA-binding</keyword>
<keyword id="KW-0698">rRNA processing</keyword>
<keyword id="KW-0949">S-adenosyl-L-methionine</keyword>
<keyword id="KW-0808">Transferase</keyword>
<sequence>MNNRVHQGHLARKRFGQNFLNDQFVIDSIVSAINPQKGQAMVEIGPGLAALTEPVGERLDQLTVIELDRDLAARLQTHPFLGPKLTIYQQDAMTFNFGELAEKMGQPLRVFGNLPYNISTPLMFHLFSYTDAIADMHFMLQKEVVNRLVAGPNSKAYGRLSVMAQYYCNVIPVLEVPPSAFTPPPKVDSAVVRLVPHATMPHPVKDIRVLSRITTEAFNQRRKTIRNSLGNLFSVEVLTGMGIDPAMRAENISVAQYCQMANYLAENAPLQES</sequence>
<organism>
    <name type="scientific">Shigella flexneri</name>
    <dbReference type="NCBI Taxonomy" id="623"/>
    <lineage>
        <taxon>Bacteria</taxon>
        <taxon>Pseudomonadati</taxon>
        <taxon>Pseudomonadota</taxon>
        <taxon>Gammaproteobacteria</taxon>
        <taxon>Enterobacterales</taxon>
        <taxon>Enterobacteriaceae</taxon>
        <taxon>Shigella</taxon>
    </lineage>
</organism>